<name>DNAJL_MYCPN</name>
<feature type="chain" id="PRO_0000071001" description="DnaJ-like protein MG002 homolog">
    <location>
        <begin position="1"/>
        <end position="309"/>
    </location>
</feature>
<feature type="domain" description="J" evidence="1">
    <location>
        <begin position="1"/>
        <end position="66"/>
    </location>
</feature>
<keyword id="KW-0143">Chaperone</keyword>
<keyword id="KW-1185">Reference proteome</keyword>
<dbReference type="EMBL" id="U34816">
    <property type="protein sequence ID" value="AAC43644.1"/>
    <property type="molecule type" value="Genomic_DNA"/>
</dbReference>
<dbReference type="EMBL" id="U00089">
    <property type="protein sequence ID" value="AAG34740.1"/>
    <property type="molecule type" value="Genomic_DNA"/>
</dbReference>
<dbReference type="PIR" id="S62835">
    <property type="entry name" value="S62835"/>
</dbReference>
<dbReference type="RefSeq" id="NP_109690.1">
    <property type="nucleotide sequence ID" value="NC_000912.1"/>
</dbReference>
<dbReference type="RefSeq" id="WP_010874359.1">
    <property type="nucleotide sequence ID" value="NZ_OU342337.1"/>
</dbReference>
<dbReference type="SMR" id="Q50312"/>
<dbReference type="IntAct" id="Q50312">
    <property type="interactions" value="7"/>
</dbReference>
<dbReference type="STRING" id="272634.MPN_002"/>
<dbReference type="EnsemblBacteria" id="AAG34740">
    <property type="protein sequence ID" value="AAG34740"/>
    <property type="gene ID" value="MPN_002"/>
</dbReference>
<dbReference type="KEGG" id="mpn:MPN_002"/>
<dbReference type="PATRIC" id="fig|272634.6.peg.2"/>
<dbReference type="HOGENOM" id="CLU_896645_0_0_14"/>
<dbReference type="OrthoDB" id="9779889at2"/>
<dbReference type="BioCyc" id="MPNE272634:G1GJ3-5-MONOMER"/>
<dbReference type="Proteomes" id="UP000000808">
    <property type="component" value="Chromosome"/>
</dbReference>
<dbReference type="GO" id="GO:0051787">
    <property type="term" value="F:misfolded protein binding"/>
    <property type="evidence" value="ECO:0007669"/>
    <property type="project" value="TreeGrafter"/>
</dbReference>
<dbReference type="GO" id="GO:0051087">
    <property type="term" value="F:protein-folding chaperone binding"/>
    <property type="evidence" value="ECO:0007669"/>
    <property type="project" value="TreeGrafter"/>
</dbReference>
<dbReference type="CDD" id="cd06257">
    <property type="entry name" value="DnaJ"/>
    <property type="match status" value="1"/>
</dbReference>
<dbReference type="Gene3D" id="1.10.287.110">
    <property type="entry name" value="DnaJ domain"/>
    <property type="match status" value="1"/>
</dbReference>
<dbReference type="InterPro" id="IPR001623">
    <property type="entry name" value="DnaJ_domain"/>
</dbReference>
<dbReference type="InterPro" id="IPR018253">
    <property type="entry name" value="DnaJ_domain_CS"/>
</dbReference>
<dbReference type="InterPro" id="IPR051948">
    <property type="entry name" value="Hsp70_co-chaperone_J-domain"/>
</dbReference>
<dbReference type="InterPro" id="IPR036869">
    <property type="entry name" value="J_dom_sf"/>
</dbReference>
<dbReference type="PANTHER" id="PTHR44360">
    <property type="entry name" value="DNAJ HOMOLOG SUBFAMILY B MEMBER 9"/>
    <property type="match status" value="1"/>
</dbReference>
<dbReference type="PANTHER" id="PTHR44360:SF1">
    <property type="entry name" value="DNAJ HOMOLOG SUBFAMILY B MEMBER 9"/>
    <property type="match status" value="1"/>
</dbReference>
<dbReference type="Pfam" id="PF00226">
    <property type="entry name" value="DnaJ"/>
    <property type="match status" value="1"/>
</dbReference>
<dbReference type="PRINTS" id="PR00625">
    <property type="entry name" value="JDOMAIN"/>
</dbReference>
<dbReference type="SMART" id="SM00271">
    <property type="entry name" value="DnaJ"/>
    <property type="match status" value="1"/>
</dbReference>
<dbReference type="SUPFAM" id="SSF46565">
    <property type="entry name" value="Chaperone J-domain"/>
    <property type="match status" value="1"/>
</dbReference>
<dbReference type="PROSITE" id="PS00636">
    <property type="entry name" value="DNAJ_1"/>
    <property type="match status" value="1"/>
</dbReference>
<dbReference type="PROSITE" id="PS50076">
    <property type="entry name" value="DNAJ_2"/>
    <property type="match status" value="1"/>
</dbReference>
<proteinExistence type="predicted"/>
<organism>
    <name type="scientific">Mycoplasma pneumoniae (strain ATCC 29342 / M129 / Subtype 1)</name>
    <name type="common">Mycoplasmoides pneumoniae</name>
    <dbReference type="NCBI Taxonomy" id="272634"/>
    <lineage>
        <taxon>Bacteria</taxon>
        <taxon>Bacillati</taxon>
        <taxon>Mycoplasmatota</taxon>
        <taxon>Mycoplasmoidales</taxon>
        <taxon>Mycoplasmoidaceae</taxon>
        <taxon>Mycoplasmoides</taxon>
    </lineage>
</organism>
<accession>Q50312</accession>
<gene>
    <name type="ordered locus">MPN_002</name>
    <name type="ORF">MP152</name>
</gene>
<sequence>MTLYDLLELPQTATLQEIKTAYKRLAKRYHPDINKQGADTFVKINNAYAVLSDTTQKAEYDAMLRFSEFEDRVKRLDFSIKWHEQFMEELQFHHNWDFDFIRNREYTQPTPTNNKYSSFLDKDVSLAFYQLYSKGKLDFDLEDTLLRRHSIKQAFLKGKKLNDVLKEQYNYLGWLEAKRYFNIDVEIELTPKEVREGGVVNLPLKIKVISNNYPGQMWYELNKNYSFRLLWDIKNGEVAEFFGKGNRALGWRGDLIVRMRIVDKIKKRLRIFSSHFEQDKTKLWFLVPQDKQDNPNKWVFDYKTHEFIV</sequence>
<protein>
    <recommendedName>
        <fullName>DnaJ-like protein MG002 homolog</fullName>
    </recommendedName>
</protein>
<reference key="1">
    <citation type="journal article" date="1996" name="Nucleic Acids Res.">
        <title>Sequence analysis of 56 kb from the genome of the bacterium Mycoplasma pneumoniae comprising the dnaA region, the atp operon and a cluster of ribosomal protein genes.</title>
        <authorList>
            <person name="Hilbert H."/>
            <person name="Himmelreich R."/>
            <person name="Plagens H."/>
            <person name="Herrmann R."/>
        </authorList>
    </citation>
    <scope>NUCLEOTIDE SEQUENCE [GENOMIC DNA]</scope>
    <source>
        <strain>ATCC 29342 / M129 / Subtype 1</strain>
    </source>
</reference>
<reference key="2">
    <citation type="journal article" date="1996" name="Nucleic Acids Res.">
        <title>Complete sequence analysis of the genome of the bacterium Mycoplasma pneumoniae.</title>
        <authorList>
            <person name="Himmelreich R."/>
            <person name="Hilbert H."/>
            <person name="Plagens H."/>
            <person name="Pirkl E."/>
            <person name="Li B.-C."/>
            <person name="Herrmann R."/>
        </authorList>
    </citation>
    <scope>NUCLEOTIDE SEQUENCE [LARGE SCALE GENOMIC DNA]</scope>
    <source>
        <strain>ATCC 29342 / M129 / Subtype 1</strain>
    </source>
</reference>
<evidence type="ECO:0000255" key="1">
    <source>
        <dbReference type="PROSITE-ProRule" id="PRU00286"/>
    </source>
</evidence>